<proteinExistence type="inferred from homology"/>
<name>MTNN_ECOK1</name>
<reference key="1">
    <citation type="journal article" date="2007" name="J. Bacteriol.">
        <title>The genome sequence of avian pathogenic Escherichia coli strain O1:K1:H7 shares strong similarities with human extraintestinal pathogenic E. coli genomes.</title>
        <authorList>
            <person name="Johnson T.J."/>
            <person name="Kariyawasam S."/>
            <person name="Wannemuehler Y."/>
            <person name="Mangiamele P."/>
            <person name="Johnson S.J."/>
            <person name="Doetkott C."/>
            <person name="Skyberg J.A."/>
            <person name="Lynne A.M."/>
            <person name="Johnson J.R."/>
            <person name="Nolan L.K."/>
        </authorList>
    </citation>
    <scope>NUCLEOTIDE SEQUENCE [LARGE SCALE GENOMIC DNA]</scope>
</reference>
<feature type="chain" id="PRO_0000359298" description="5'-methylthioadenosine/S-adenosylhomocysteine nucleosidase">
    <location>
        <begin position="1"/>
        <end position="232"/>
    </location>
</feature>
<feature type="active site" description="Proton acceptor" evidence="1">
    <location>
        <position position="12"/>
    </location>
</feature>
<feature type="active site" description="Proton donor" evidence="1">
    <location>
        <position position="197"/>
    </location>
</feature>
<feature type="binding site" evidence="1">
    <location>
        <position position="78"/>
    </location>
    <ligand>
        <name>substrate</name>
    </ligand>
</feature>
<feature type="binding site" evidence="1">
    <location>
        <position position="152"/>
    </location>
    <ligand>
        <name>substrate</name>
    </ligand>
</feature>
<feature type="binding site" evidence="1">
    <location>
        <begin position="173"/>
        <end position="174"/>
    </location>
    <ligand>
        <name>substrate</name>
    </ligand>
</feature>
<accession>A1A7K5</accession>
<organism>
    <name type="scientific">Escherichia coli O1:K1 / APEC</name>
    <dbReference type="NCBI Taxonomy" id="405955"/>
    <lineage>
        <taxon>Bacteria</taxon>
        <taxon>Pseudomonadati</taxon>
        <taxon>Pseudomonadota</taxon>
        <taxon>Gammaproteobacteria</taxon>
        <taxon>Enterobacterales</taxon>
        <taxon>Enterobacteriaceae</taxon>
        <taxon>Escherichia</taxon>
    </lineage>
</organism>
<protein>
    <recommendedName>
        <fullName evidence="1">5'-methylthioadenosine/S-adenosylhomocysteine nucleosidase</fullName>
        <shortName evidence="1">MTA/SAH nucleosidase</shortName>
        <shortName evidence="1">MTAN</shortName>
        <ecNumber evidence="1">3.2.2.9</ecNumber>
    </recommendedName>
    <alternativeName>
        <fullName evidence="1">5'-deoxyadenosine nucleosidase</fullName>
        <shortName evidence="1">DOA nucleosidase</shortName>
        <shortName evidence="1">dAdo nucleosidase</shortName>
    </alternativeName>
    <alternativeName>
        <fullName evidence="1">5'-methylthioadenosine nucleosidase</fullName>
        <shortName evidence="1">MTA nucleosidase</shortName>
    </alternativeName>
    <alternativeName>
        <fullName evidence="1">S-adenosylhomocysteine nucleosidase</fullName>
        <shortName evidence="1">AdoHcy nucleosidase</shortName>
        <shortName evidence="1">SAH nucleosidase</shortName>
        <shortName evidence="1">SRH nucleosidase</shortName>
    </alternativeName>
</protein>
<evidence type="ECO:0000255" key="1">
    <source>
        <dbReference type="HAMAP-Rule" id="MF_01684"/>
    </source>
</evidence>
<keyword id="KW-0028">Amino-acid biosynthesis</keyword>
<keyword id="KW-0378">Hydrolase</keyword>
<keyword id="KW-0486">Methionine biosynthesis</keyword>
<keyword id="KW-1185">Reference proteome</keyword>
<gene>
    <name evidence="1" type="primary">mtnN</name>
    <name type="ordered locus">Ecok1_01510</name>
    <name type="ORF">APECO1_1826</name>
</gene>
<dbReference type="EC" id="3.2.2.9" evidence="1"/>
<dbReference type="EMBL" id="CP000468">
    <property type="protein sequence ID" value="ABI99644.1"/>
    <property type="molecule type" value="Genomic_DNA"/>
</dbReference>
<dbReference type="RefSeq" id="WP_000689844.1">
    <property type="nucleotide sequence ID" value="NZ_CADILS010000027.1"/>
</dbReference>
<dbReference type="SMR" id="A1A7K5"/>
<dbReference type="GeneID" id="93777267"/>
<dbReference type="KEGG" id="ecv:APECO1_1826"/>
<dbReference type="HOGENOM" id="CLU_031248_2_2_6"/>
<dbReference type="UniPathway" id="UPA00904">
    <property type="reaction ID" value="UER00871"/>
</dbReference>
<dbReference type="Proteomes" id="UP000008216">
    <property type="component" value="Chromosome"/>
</dbReference>
<dbReference type="GO" id="GO:0005829">
    <property type="term" value="C:cytosol"/>
    <property type="evidence" value="ECO:0007669"/>
    <property type="project" value="TreeGrafter"/>
</dbReference>
<dbReference type="GO" id="GO:0008782">
    <property type="term" value="F:adenosylhomocysteine nucleosidase activity"/>
    <property type="evidence" value="ECO:0007669"/>
    <property type="project" value="UniProtKB-UniRule"/>
</dbReference>
<dbReference type="GO" id="GO:0008930">
    <property type="term" value="F:methylthioadenosine nucleosidase activity"/>
    <property type="evidence" value="ECO:0007669"/>
    <property type="project" value="UniProtKB-UniRule"/>
</dbReference>
<dbReference type="GO" id="GO:0019509">
    <property type="term" value="P:L-methionine salvage from methylthioadenosine"/>
    <property type="evidence" value="ECO:0007669"/>
    <property type="project" value="UniProtKB-UniRule"/>
</dbReference>
<dbReference type="GO" id="GO:0019284">
    <property type="term" value="P:L-methionine salvage from S-adenosylmethionine"/>
    <property type="evidence" value="ECO:0007669"/>
    <property type="project" value="TreeGrafter"/>
</dbReference>
<dbReference type="GO" id="GO:0046124">
    <property type="term" value="P:purine deoxyribonucleoside catabolic process"/>
    <property type="evidence" value="ECO:0007669"/>
    <property type="project" value="UniProtKB-UniRule"/>
</dbReference>
<dbReference type="CDD" id="cd09008">
    <property type="entry name" value="MTAN"/>
    <property type="match status" value="1"/>
</dbReference>
<dbReference type="FunFam" id="3.40.50.1580:FF:000001">
    <property type="entry name" value="MTA/SAH nucleosidase family protein"/>
    <property type="match status" value="1"/>
</dbReference>
<dbReference type="Gene3D" id="3.40.50.1580">
    <property type="entry name" value="Nucleoside phosphorylase domain"/>
    <property type="match status" value="1"/>
</dbReference>
<dbReference type="HAMAP" id="MF_01684">
    <property type="entry name" value="Salvage_MtnN"/>
    <property type="match status" value="1"/>
</dbReference>
<dbReference type="InterPro" id="IPR010049">
    <property type="entry name" value="MTA_SAH_Nsdase"/>
</dbReference>
<dbReference type="InterPro" id="IPR000845">
    <property type="entry name" value="Nucleoside_phosphorylase_d"/>
</dbReference>
<dbReference type="InterPro" id="IPR035994">
    <property type="entry name" value="Nucleoside_phosphorylase_sf"/>
</dbReference>
<dbReference type="NCBIfam" id="TIGR01704">
    <property type="entry name" value="MTA_SAH-Nsdase"/>
    <property type="match status" value="1"/>
</dbReference>
<dbReference type="NCBIfam" id="NF004079">
    <property type="entry name" value="PRK05584.1"/>
    <property type="match status" value="1"/>
</dbReference>
<dbReference type="PANTHER" id="PTHR46832">
    <property type="entry name" value="5'-METHYLTHIOADENOSINE/S-ADENOSYLHOMOCYSTEINE NUCLEOSIDASE"/>
    <property type="match status" value="1"/>
</dbReference>
<dbReference type="PANTHER" id="PTHR46832:SF1">
    <property type="entry name" value="5'-METHYLTHIOADENOSINE_S-ADENOSYLHOMOCYSTEINE NUCLEOSIDASE"/>
    <property type="match status" value="1"/>
</dbReference>
<dbReference type="Pfam" id="PF01048">
    <property type="entry name" value="PNP_UDP_1"/>
    <property type="match status" value="1"/>
</dbReference>
<dbReference type="SUPFAM" id="SSF53167">
    <property type="entry name" value="Purine and uridine phosphorylases"/>
    <property type="match status" value="1"/>
</dbReference>
<sequence length="232" mass="24354">MKIGIIGAMEEEVTLLRDKIENRQTISLGGCEIYTGQLNGTEVALLKSGIGKVAAALGATLLLEHCKPDVIINTGSAGGLAPTLKVGDIVVSDEARYHDADVTAFGYEYGQLPGCPAGFKADDKLIAAAEACIAELNLNAVRGLIVSGDAFINGSVGLAKIRHNFPQAIAVEMEATAIAHVCHNFNVPFVVVRAISDVADQQSHLSFDEFLAVAAKQSSLMVESLVQKLAHG</sequence>
<comment type="function">
    <text evidence="1">Catalyzes the irreversible cleavage of the glycosidic bond in both 5'-methylthioadenosine (MTA) and S-adenosylhomocysteine (SAH/AdoHcy) to adenine and the corresponding thioribose, 5'-methylthioribose and S-ribosylhomocysteine, respectively. Also cleaves 5'-deoxyadenosine, a toxic by-product of radical S-adenosylmethionine (SAM) enzymes, into 5-deoxyribose and adenine. Thus, is required for in vivo function of the radical SAM enzymes biotin synthase and lipoic acid synthase, that are inhibited by 5'-deoxyadenosine accumulation.</text>
</comment>
<comment type="catalytic activity">
    <reaction evidence="1">
        <text>S-adenosyl-L-homocysteine + H2O = S-(5-deoxy-D-ribos-5-yl)-L-homocysteine + adenine</text>
        <dbReference type="Rhea" id="RHEA:17805"/>
        <dbReference type="ChEBI" id="CHEBI:15377"/>
        <dbReference type="ChEBI" id="CHEBI:16708"/>
        <dbReference type="ChEBI" id="CHEBI:57856"/>
        <dbReference type="ChEBI" id="CHEBI:58195"/>
        <dbReference type="EC" id="3.2.2.9"/>
    </reaction>
</comment>
<comment type="catalytic activity">
    <reaction evidence="1">
        <text>S-methyl-5'-thioadenosine + H2O = 5-(methylsulfanyl)-D-ribose + adenine</text>
        <dbReference type="Rhea" id="RHEA:13617"/>
        <dbReference type="ChEBI" id="CHEBI:15377"/>
        <dbReference type="ChEBI" id="CHEBI:16708"/>
        <dbReference type="ChEBI" id="CHEBI:17509"/>
        <dbReference type="ChEBI" id="CHEBI:78440"/>
        <dbReference type="EC" id="3.2.2.9"/>
    </reaction>
</comment>
<comment type="catalytic activity">
    <reaction evidence="1">
        <text>5'-deoxyadenosine + H2O = 5-deoxy-D-ribose + adenine</text>
        <dbReference type="Rhea" id="RHEA:29859"/>
        <dbReference type="ChEBI" id="CHEBI:15377"/>
        <dbReference type="ChEBI" id="CHEBI:16708"/>
        <dbReference type="ChEBI" id="CHEBI:17319"/>
        <dbReference type="ChEBI" id="CHEBI:149540"/>
        <dbReference type="EC" id="3.2.2.9"/>
    </reaction>
    <physiologicalReaction direction="left-to-right" evidence="1">
        <dbReference type="Rhea" id="RHEA:29860"/>
    </physiologicalReaction>
</comment>
<comment type="pathway">
    <text evidence="1">Amino-acid biosynthesis; L-methionine biosynthesis via salvage pathway; S-methyl-5-thio-alpha-D-ribose 1-phosphate from S-methyl-5'-thioadenosine (hydrolase route): step 1/2.</text>
</comment>
<comment type="subunit">
    <text evidence="1">Homodimer.</text>
</comment>
<comment type="similarity">
    <text evidence="1">Belongs to the PNP/UDP phosphorylase family. MtnN subfamily.</text>
</comment>